<dbReference type="EC" id="2.5.1.-" evidence="2"/>
<dbReference type="EMBL" id="JOMC01000221">
    <property type="protein sequence ID" value="KIA75360.1"/>
    <property type="molecule type" value="Genomic_DNA"/>
</dbReference>
<dbReference type="SMR" id="A0A0C1C2W0"/>
<dbReference type="Proteomes" id="UP000053475">
    <property type="component" value="Unassembled WGS sequence"/>
</dbReference>
<dbReference type="GO" id="GO:0004659">
    <property type="term" value="F:prenyltransferase activity"/>
    <property type="evidence" value="ECO:0007669"/>
    <property type="project" value="UniProtKB-KW"/>
</dbReference>
<dbReference type="GO" id="GO:0009820">
    <property type="term" value="P:alkaloid metabolic process"/>
    <property type="evidence" value="ECO:0007669"/>
    <property type="project" value="InterPro"/>
</dbReference>
<dbReference type="CDD" id="cd13929">
    <property type="entry name" value="PT-DMATS_CymD"/>
    <property type="match status" value="1"/>
</dbReference>
<dbReference type="InterPro" id="IPR017795">
    <property type="entry name" value="Aro_prenylTrfase_DMATS"/>
</dbReference>
<dbReference type="InterPro" id="IPR012148">
    <property type="entry name" value="DMATS-type_fun"/>
</dbReference>
<dbReference type="NCBIfam" id="TIGR03429">
    <property type="entry name" value="arom_pren_DMATS"/>
    <property type="match status" value="1"/>
</dbReference>
<dbReference type="PANTHER" id="PTHR40627">
    <property type="entry name" value="INDOLE PRENYLTRANSFERASE TDIB-RELATED"/>
    <property type="match status" value="1"/>
</dbReference>
<dbReference type="PANTHER" id="PTHR40627:SF3">
    <property type="entry name" value="PRENYLTRANSFERASE ASQH2-RELATED"/>
    <property type="match status" value="1"/>
</dbReference>
<dbReference type="Pfam" id="PF11991">
    <property type="entry name" value="Trp_DMAT"/>
    <property type="match status" value="1"/>
</dbReference>
<dbReference type="PIRSF" id="PIRSF000509">
    <property type="entry name" value="Trp_DMAT"/>
    <property type="match status" value="1"/>
</dbReference>
<comment type="function">
    <text evidence="2">Nonribosomal peptide synthetase that mediates the biosynthesis of usterphenyllins and uscandidusins, p-terphenyl derivatives (PubMed:37607357). Within the pathway, ucdE prenylates position C-5 of ring A of 3,15-dihydroxyterphenyllin to produce forms usterphenyllin B (PubMed:37607357). UcdE further prenylates position C-14 of ring C of usterphenyllin B to form usterphenyllin A (PubMed:37607357). The pathway begin with the biosynthesis of 4-hydroxyphenylpyruvate (HPPA) from L-tyrosine, possibly by the aminotransferase ucdG. The nonribosomal peptide synthetase ucdA then condenses two HPPA units to produce atromentin. The key step in this pathway is the reduction and dehydration of atromentin to form a terphenyl triol intermediate, performed by the NAD-dependent dehydrogenase ucdB. Further O-methylation by the methyltransferase ucdC forms terphenyllin carrying two methoxy moieties at C-9 and C-12, and subsequent dihydroxylation at C-3 of ring A and C-15 of ring C by the flavin-dependent oxygenase ucdD leads to 3,15-dihydroxyterphenyllin. Prenylation by ucdE at position C-5 of ring A forms usterphenyllin B, and is followed by a second prenylation at position C-14 of ring C to form usterphenyllin A. The following furan ring formation that leads to uscandidusins A and B was proven to be an unexpected spontaneous non-enzymatic reaction (PubMed:37607357).</text>
</comment>
<comment type="pathway">
    <text evidence="2">Secondary metabolite biosynthesis.</text>
</comment>
<comment type="disruption phenotype">
    <text evidence="2">Impairs the production of usterphenyllins and uscandidusins and leads to the accumulation of 3,15-dihydroxyterphenyllin.</text>
</comment>
<comment type="similarity">
    <text evidence="4">Belongs to the tryptophan dimethylallyltransferase family.</text>
</comment>
<name>UCDE_ASPUT</name>
<gene>
    <name evidence="3" type="primary">ucdE</name>
    <name type="ORF">HK57_00189</name>
</gene>
<organism>
    <name type="scientific">Aspergillus ustus</name>
    <dbReference type="NCBI Taxonomy" id="40382"/>
    <lineage>
        <taxon>Eukaryota</taxon>
        <taxon>Fungi</taxon>
        <taxon>Dikarya</taxon>
        <taxon>Ascomycota</taxon>
        <taxon>Pezizomycotina</taxon>
        <taxon>Eurotiomycetes</taxon>
        <taxon>Eurotiomycetidae</taxon>
        <taxon>Eurotiales</taxon>
        <taxon>Aspergillaceae</taxon>
        <taxon>Aspergillus</taxon>
        <taxon>Aspergillus subgen. Nidulantes</taxon>
    </lineage>
</organism>
<sequence length="457" mass="51927">MDTQPQSNHPSVISAQLTPYDALDLAFTFEDRHQHEWWKRAGPVLGLTMRHARYDLNKQYQYLAFFARQIIPLLGPFPESAGSDYQRGFIPLEVSQNFQQSGTTVRLCFEPRTYSGYAIAKDPFGDLLVQEVVAKLGQVRGVKVDLQMFRQLASILNLTKDEEEELYQPACYENLPPTFKIQNIVGIQLPRSGNITLKADWFLSAKSLVSTIPITELSFEAIRTVDQGKNLFTPGLRPIEEYFRSMEMQPASPSHPRTTEFNAIACHLDDSTNARLKIYLSERLLKFDRVADIWTLGGRLKNCPGISQGLELVRALWSILQIKEGHHFPLAVNSLMMKGGDPASLAAAEKEDYPETQFFDEQFLVLNFEIRPGDPWPQPKIYFLLTELADNKVADAVVALFNRLGWVEEASRYKENLAAYYPHRDLDKTSGLQRFLSFSYSAKNGPYTSVYHWGIGG</sequence>
<proteinExistence type="evidence at protein level"/>
<reference key="1">
    <citation type="submission" date="2014-11" db="EMBL/GenBank/DDBJ databases">
        <title>Genomics derived discovery of secondary metabolites biosynthetic gene clusters in Aspergillus ustus.</title>
        <authorList>
            <person name="Pi B."/>
            <person name="Dai F."/>
            <person name="Song X."/>
            <person name="Zhu C."/>
            <person name="Li H."/>
            <person name="Yu D."/>
        </authorList>
    </citation>
    <scope>NUCLEOTIDE SEQUENCE [LARGE SCALE GENOMIC DNA]</scope>
    <source>
        <strain>3.3904</strain>
    </source>
</reference>
<reference key="2">
    <citation type="journal article" date="2023" name="Org. Lett.">
        <title>Biosynthesis of p-terphenyls in Aspergillus ustus implies enzymatic reductive dehydration and spontaneous dibenzofuran formation.</title>
        <authorList>
            <person name="Janzen D.J."/>
            <person name="Zhou J."/>
            <person name="Li S.M."/>
        </authorList>
    </citation>
    <scope>FUNCTION</scope>
    <scope>CATALYTIC ACTIVITY</scope>
    <scope>DISRUPTION PHENOTYPE</scope>
    <scope>PATHWAY</scope>
</reference>
<protein>
    <recommendedName>
        <fullName evidence="3">Prenyltransferase ucdE</fullName>
        <ecNumber evidence="2">2.5.1.-</ecNumber>
    </recommendedName>
    <alternativeName>
        <fullName evidence="3">Uscandidusin biosynthesis cluster protein E</fullName>
    </alternativeName>
</protein>
<feature type="chain" id="PRO_0000460399" description="Prenyltransferase ucdE">
    <location>
        <begin position="1"/>
        <end position="457"/>
    </location>
</feature>
<feature type="binding site" evidence="1">
    <location>
        <position position="106"/>
    </location>
    <ligand>
        <name>dimethylallyl diphosphate</name>
        <dbReference type="ChEBI" id="CHEBI:57623"/>
    </ligand>
</feature>
<feature type="binding site" evidence="1">
    <location>
        <position position="198"/>
    </location>
    <ligand>
        <name>dimethylallyl diphosphate</name>
        <dbReference type="ChEBI" id="CHEBI:57623"/>
    </ligand>
</feature>
<feature type="binding site" evidence="1">
    <location>
        <position position="277"/>
    </location>
    <ligand>
        <name>dimethylallyl diphosphate</name>
        <dbReference type="ChEBI" id="CHEBI:57623"/>
    </ligand>
</feature>
<feature type="binding site" evidence="1">
    <location>
        <position position="279"/>
    </location>
    <ligand>
        <name>dimethylallyl diphosphate</name>
        <dbReference type="ChEBI" id="CHEBI:57623"/>
    </ligand>
</feature>
<feature type="binding site" evidence="1">
    <location>
        <position position="382"/>
    </location>
    <ligand>
        <name>dimethylallyl diphosphate</name>
        <dbReference type="ChEBI" id="CHEBI:57623"/>
    </ligand>
</feature>
<feature type="binding site" evidence="1">
    <location>
        <position position="447"/>
    </location>
    <ligand>
        <name>dimethylallyl diphosphate</name>
        <dbReference type="ChEBI" id="CHEBI:57623"/>
    </ligand>
</feature>
<feature type="binding site" evidence="1">
    <location>
        <position position="451"/>
    </location>
    <ligand>
        <name>dimethylallyl diphosphate</name>
        <dbReference type="ChEBI" id="CHEBI:57623"/>
    </ligand>
</feature>
<evidence type="ECO:0000250" key="1">
    <source>
        <dbReference type="UniProtKB" id="Q4WAW7"/>
    </source>
</evidence>
<evidence type="ECO:0000269" key="2">
    <source>
    </source>
</evidence>
<evidence type="ECO:0000303" key="3">
    <source>
    </source>
</evidence>
<evidence type="ECO:0000305" key="4"/>
<accession>A0A0C1C2W0</accession>
<keyword id="KW-0637">Prenyltransferase</keyword>
<keyword id="KW-1185">Reference proteome</keyword>
<keyword id="KW-0808">Transferase</keyword>